<proteinExistence type="evidence at transcript level"/>
<accession>Q6NRI1</accession>
<sequence>MLPLSIKDDEYKPPKFNLVRKVSGWIRSIFSDSTSRNLFCFLCLNLSFAFVELFYGIWSNSLGLISDSFHMFFDCTALLAGLAASVISRWKTNETFSYGYVRAEVLAGFVNGLFLIFTAFFIFSEGIERALDTPEVHHERLLPVSIMGFLVNLIGIFVFQHGGGHGHSHESGHGHSHSLFNGAVSHGHSHSHGGGHGHSHGGGHEHGHSHGGGHEHGHDHSHKHGHGYGSSCHDEPPEENKGSSKQILEGVFLHIVADALGSVGVIISTILMQQYGLMIADPICSMLIALLIFVSVIPLLKQSIGILMQRTPPSLDHVLPQCYQRVQQLQGVYHLQEPHFWTLCTDVYIGTLKLVIGPEADARWILSQTHNIFTQAGVRQLYVQIDLAAM</sequence>
<evidence type="ECO:0000250" key="1">
    <source>
        <dbReference type="UniProtKB" id="Q5BJM8"/>
    </source>
</evidence>
<evidence type="ECO:0000250" key="2">
    <source>
        <dbReference type="UniProtKB" id="Q8NEW0"/>
    </source>
</evidence>
<evidence type="ECO:0000250" key="3">
    <source>
        <dbReference type="UniProtKB" id="Q9JKN1"/>
    </source>
</evidence>
<evidence type="ECO:0000255" key="4"/>
<evidence type="ECO:0000256" key="5">
    <source>
        <dbReference type="SAM" id="MobiDB-lite"/>
    </source>
</evidence>
<evidence type="ECO:0000305" key="6"/>
<reference key="1">
    <citation type="submission" date="2004-05" db="EMBL/GenBank/DDBJ databases">
        <authorList>
            <consortium name="NIH - Xenopus Gene Collection (XGC) project"/>
        </authorList>
    </citation>
    <scope>NUCLEOTIDE SEQUENCE [LARGE SCALE MRNA]</scope>
    <source>
        <tissue>Oocyte</tissue>
    </source>
</reference>
<feature type="chain" id="PRO_0000314305" description="Zinc transporter 7-B">
    <location>
        <begin position="1"/>
        <end position="390"/>
    </location>
</feature>
<feature type="topological domain" description="Cytoplasmic" evidence="6">
    <location>
        <begin position="1"/>
        <end position="37"/>
    </location>
</feature>
<feature type="transmembrane region" description="Helical" evidence="4">
    <location>
        <begin position="38"/>
        <end position="58"/>
    </location>
</feature>
<feature type="topological domain" description="Lumenal" evidence="6">
    <location>
        <begin position="59"/>
        <end position="67"/>
    </location>
</feature>
<feature type="transmembrane region" description="Helical" evidence="4">
    <location>
        <begin position="68"/>
        <end position="88"/>
    </location>
</feature>
<feature type="topological domain" description="Cytoplasmic" evidence="6">
    <location>
        <begin position="89"/>
        <end position="102"/>
    </location>
</feature>
<feature type="transmembrane region" description="Helical" evidence="4">
    <location>
        <begin position="103"/>
        <end position="123"/>
    </location>
</feature>
<feature type="topological domain" description="Lumenal" evidence="6">
    <location>
        <begin position="124"/>
        <end position="140"/>
    </location>
</feature>
<feature type="transmembrane region" description="Helical" evidence="4">
    <location>
        <begin position="141"/>
        <end position="161"/>
    </location>
</feature>
<feature type="topological domain" description="Cytoplasmic" evidence="6">
    <location>
        <begin position="162"/>
        <end position="250"/>
    </location>
</feature>
<feature type="transmembrane region" description="Helical" evidence="4">
    <location>
        <begin position="251"/>
        <end position="271"/>
    </location>
</feature>
<feature type="topological domain" description="Lumenal" evidence="6">
    <location>
        <begin position="272"/>
        <end position="276"/>
    </location>
</feature>
<feature type="transmembrane region" description="Helical" evidence="4">
    <location>
        <begin position="277"/>
        <end position="297"/>
    </location>
</feature>
<feature type="topological domain" description="Cytoplasmic" evidence="6">
    <location>
        <begin position="298"/>
        <end position="390"/>
    </location>
</feature>
<feature type="region of interest" description="His-rich loop">
    <location>
        <begin position="161"/>
        <end position="226"/>
    </location>
</feature>
<feature type="region of interest" description="Disordered" evidence="5">
    <location>
        <begin position="166"/>
        <end position="243"/>
    </location>
</feature>
<feature type="compositionally biased region" description="Basic residues" evidence="5">
    <location>
        <begin position="187"/>
        <end position="201"/>
    </location>
</feature>
<feature type="compositionally biased region" description="Basic and acidic residues" evidence="5">
    <location>
        <begin position="202"/>
        <end position="218"/>
    </location>
</feature>
<feature type="compositionally biased region" description="Basic and acidic residues" evidence="5">
    <location>
        <begin position="232"/>
        <end position="242"/>
    </location>
</feature>
<keyword id="KW-0968">Cytoplasmic vesicle</keyword>
<keyword id="KW-0333">Golgi apparatus</keyword>
<keyword id="KW-0406">Ion transport</keyword>
<keyword id="KW-0472">Membrane</keyword>
<keyword id="KW-0496">Mitochondrion</keyword>
<keyword id="KW-1185">Reference proteome</keyword>
<keyword id="KW-0703">Sarcoplasmic reticulum</keyword>
<keyword id="KW-0812">Transmembrane</keyword>
<keyword id="KW-1133">Transmembrane helix</keyword>
<keyword id="KW-0813">Transport</keyword>
<keyword id="KW-0862">Zinc</keyword>
<keyword id="KW-0864">Zinc transport</keyword>
<comment type="function">
    <text evidence="2">Zinc ion transporter mediating zinc entry from the cytosol into the lumen of organelles along the secretory pathway. By contributing to zinc ion homeostasis within the early secretory pathway, regulates the activation and folding of enzymes like alkaline phosphatases.</text>
</comment>
<comment type="catalytic activity">
    <reaction evidence="2">
        <text>Zn(2+)(in) = Zn(2+)(out)</text>
        <dbReference type="Rhea" id="RHEA:29351"/>
        <dbReference type="ChEBI" id="CHEBI:29105"/>
    </reaction>
</comment>
<comment type="subunit">
    <text evidence="2">Homooligomer.</text>
</comment>
<comment type="subcellular location">
    <subcellularLocation>
        <location evidence="2">Golgi apparatus membrane</location>
        <topology evidence="4">Multi-pass membrane protein</topology>
    </subcellularLocation>
    <subcellularLocation>
        <location evidence="3">Cytoplasmic vesicle</location>
    </subcellularLocation>
    <subcellularLocation>
        <location evidence="3">Golgi apparatus</location>
        <location evidence="3">trans-Golgi network</location>
    </subcellularLocation>
    <subcellularLocation>
        <location evidence="1">Sarcoplasmic reticulum</location>
    </subcellularLocation>
    <subcellularLocation>
        <location evidence="1">Mitochondrion</location>
    </subcellularLocation>
</comment>
<comment type="similarity">
    <text evidence="6">Belongs to the cation diffusion facilitator (CDF) transporter (TC 2.A.4) family. SLC30A subfamily.</text>
</comment>
<protein>
    <recommendedName>
        <fullName evidence="6">Zinc transporter 7-B</fullName>
    </recommendedName>
    <alternativeName>
        <fullName>Solute carrier family 30 member 7-B</fullName>
    </alternativeName>
</protein>
<gene>
    <name type="primary">slc30a7-b</name>
    <name type="synonym">znt7-b</name>
</gene>
<name>ZNT7B_XENLA</name>
<organism>
    <name type="scientific">Xenopus laevis</name>
    <name type="common">African clawed frog</name>
    <dbReference type="NCBI Taxonomy" id="8355"/>
    <lineage>
        <taxon>Eukaryota</taxon>
        <taxon>Metazoa</taxon>
        <taxon>Chordata</taxon>
        <taxon>Craniata</taxon>
        <taxon>Vertebrata</taxon>
        <taxon>Euteleostomi</taxon>
        <taxon>Amphibia</taxon>
        <taxon>Batrachia</taxon>
        <taxon>Anura</taxon>
        <taxon>Pipoidea</taxon>
        <taxon>Pipidae</taxon>
        <taxon>Xenopodinae</taxon>
        <taxon>Xenopus</taxon>
        <taxon>Xenopus</taxon>
    </lineage>
</organism>
<dbReference type="EMBL" id="BC070769">
    <property type="protein sequence ID" value="AAH70769.1"/>
    <property type="molecule type" value="mRNA"/>
</dbReference>
<dbReference type="RefSeq" id="NP_001084857.1">
    <property type="nucleotide sequence ID" value="NM_001091388.1"/>
</dbReference>
<dbReference type="SMR" id="Q6NRI1"/>
<dbReference type="DNASU" id="431904"/>
<dbReference type="GeneID" id="431904"/>
<dbReference type="KEGG" id="xla:431904"/>
<dbReference type="AGR" id="Xenbase:XB-GENE-977020"/>
<dbReference type="CTD" id="431904"/>
<dbReference type="Xenbase" id="XB-GENE-977020">
    <property type="gene designation" value="slc30a7.L"/>
</dbReference>
<dbReference type="OMA" id="KWRANER"/>
<dbReference type="OrthoDB" id="78669at2759"/>
<dbReference type="Proteomes" id="UP000186698">
    <property type="component" value="Chromosome 4L"/>
</dbReference>
<dbReference type="Bgee" id="431904">
    <property type="expression patterns" value="Expressed in liver and 19 other cell types or tissues"/>
</dbReference>
<dbReference type="GO" id="GO:0031410">
    <property type="term" value="C:cytoplasmic vesicle"/>
    <property type="evidence" value="ECO:0000318"/>
    <property type="project" value="GO_Central"/>
</dbReference>
<dbReference type="GO" id="GO:0005794">
    <property type="term" value="C:Golgi apparatus"/>
    <property type="evidence" value="ECO:0000318"/>
    <property type="project" value="GO_Central"/>
</dbReference>
<dbReference type="GO" id="GO:1990674">
    <property type="term" value="C:Golgi cis cisterna membrane"/>
    <property type="evidence" value="ECO:0000250"/>
    <property type="project" value="UniProtKB"/>
</dbReference>
<dbReference type="GO" id="GO:0000139">
    <property type="term" value="C:Golgi membrane"/>
    <property type="evidence" value="ECO:0007669"/>
    <property type="project" value="UniProtKB-SubCell"/>
</dbReference>
<dbReference type="GO" id="GO:0005739">
    <property type="term" value="C:mitochondrion"/>
    <property type="evidence" value="ECO:0000250"/>
    <property type="project" value="UniProtKB"/>
</dbReference>
<dbReference type="GO" id="GO:0033017">
    <property type="term" value="C:sarcoplasmic reticulum membrane"/>
    <property type="evidence" value="ECO:0000250"/>
    <property type="project" value="UniProtKB"/>
</dbReference>
<dbReference type="GO" id="GO:0005385">
    <property type="term" value="F:zinc ion transmembrane transporter activity"/>
    <property type="evidence" value="ECO:0000250"/>
    <property type="project" value="UniProtKB"/>
</dbReference>
<dbReference type="GO" id="GO:0006882">
    <property type="term" value="P:intracellular zinc ion homeostasis"/>
    <property type="evidence" value="ECO:0000318"/>
    <property type="project" value="GO_Central"/>
</dbReference>
<dbReference type="GO" id="GO:1904257">
    <property type="term" value="P:zinc ion import into Golgi lumen"/>
    <property type="evidence" value="ECO:0000250"/>
    <property type="project" value="UniProtKB"/>
</dbReference>
<dbReference type="Gene3D" id="1.20.1510.10">
    <property type="entry name" value="Cation efflux protein transmembrane domain"/>
    <property type="match status" value="1"/>
</dbReference>
<dbReference type="InterPro" id="IPR002524">
    <property type="entry name" value="Cation_efflux"/>
</dbReference>
<dbReference type="InterPro" id="IPR027469">
    <property type="entry name" value="Cation_efflux_TMD_sf"/>
</dbReference>
<dbReference type="InterPro" id="IPR045316">
    <property type="entry name" value="Msc2-like"/>
</dbReference>
<dbReference type="NCBIfam" id="TIGR01297">
    <property type="entry name" value="CDF"/>
    <property type="match status" value="1"/>
</dbReference>
<dbReference type="PANTHER" id="PTHR45755">
    <property type="match status" value="1"/>
</dbReference>
<dbReference type="PANTHER" id="PTHR45755:SF4">
    <property type="entry name" value="ZINC TRANSPORTER 7"/>
    <property type="match status" value="1"/>
</dbReference>
<dbReference type="Pfam" id="PF01545">
    <property type="entry name" value="Cation_efflux"/>
    <property type="match status" value="1"/>
</dbReference>
<dbReference type="SUPFAM" id="SSF161111">
    <property type="entry name" value="Cation efflux protein transmembrane domain-like"/>
    <property type="match status" value="1"/>
</dbReference>